<dbReference type="EMBL" id="DS995703">
    <property type="protein sequence ID" value="EEQ31144.1"/>
    <property type="status" value="ALT_INIT"/>
    <property type="molecule type" value="Genomic_DNA"/>
</dbReference>
<dbReference type="RefSeq" id="XP_002848457.1">
    <property type="nucleotide sequence ID" value="XM_002848411.1"/>
</dbReference>
<dbReference type="SMR" id="C5FMP1"/>
<dbReference type="STRING" id="554155.C5FMP1"/>
<dbReference type="GeneID" id="9222779"/>
<dbReference type="eggNOG" id="ENOG502QUN5">
    <property type="taxonomic scope" value="Eukaryota"/>
</dbReference>
<dbReference type="HOGENOM" id="CLU_026505_1_0_1"/>
<dbReference type="OrthoDB" id="2103793at2759"/>
<dbReference type="Proteomes" id="UP000002035">
    <property type="component" value="Unassembled WGS sequence"/>
</dbReference>
<dbReference type="GO" id="GO:0032865">
    <property type="term" value="C:ERMES complex"/>
    <property type="evidence" value="ECO:0007669"/>
    <property type="project" value="UniProtKB-UniRule"/>
</dbReference>
<dbReference type="GO" id="GO:0001401">
    <property type="term" value="C:SAM complex"/>
    <property type="evidence" value="ECO:0007669"/>
    <property type="project" value="TreeGrafter"/>
</dbReference>
<dbReference type="GO" id="GO:0051654">
    <property type="term" value="P:establishment of mitochondrion localization"/>
    <property type="evidence" value="ECO:0007669"/>
    <property type="project" value="TreeGrafter"/>
</dbReference>
<dbReference type="GO" id="GO:0000002">
    <property type="term" value="P:mitochondrial genome maintenance"/>
    <property type="evidence" value="ECO:0007669"/>
    <property type="project" value="UniProtKB-UniRule"/>
</dbReference>
<dbReference type="GO" id="GO:0070096">
    <property type="term" value="P:mitochondrial outer membrane translocase complex assembly"/>
    <property type="evidence" value="ECO:0007669"/>
    <property type="project" value="UniProtKB-UniRule"/>
</dbReference>
<dbReference type="GO" id="GO:1990456">
    <property type="term" value="P:mitochondrion-endoplasmic reticulum membrane tethering"/>
    <property type="evidence" value="ECO:0007669"/>
    <property type="project" value="UniProtKB-UniRule"/>
</dbReference>
<dbReference type="GO" id="GO:0015914">
    <property type="term" value="P:phospholipid transport"/>
    <property type="evidence" value="ECO:0007669"/>
    <property type="project" value="TreeGrafter"/>
</dbReference>
<dbReference type="GO" id="GO:0045040">
    <property type="term" value="P:protein insertion into mitochondrial outer membrane"/>
    <property type="evidence" value="ECO:0007669"/>
    <property type="project" value="UniProtKB-UniRule"/>
</dbReference>
<dbReference type="HAMAP" id="MF_03102">
    <property type="entry name" value="Mdm10"/>
    <property type="match status" value="1"/>
</dbReference>
<dbReference type="InterPro" id="IPR027539">
    <property type="entry name" value="Mdm10"/>
</dbReference>
<dbReference type="PANTHER" id="PTHR28035">
    <property type="entry name" value="MITOCHONDRIAL DISTRIBUTION AND MORPHOLOGY PROTEIN 10"/>
    <property type="match status" value="1"/>
</dbReference>
<dbReference type="PANTHER" id="PTHR28035:SF1">
    <property type="entry name" value="MITOCHONDRIAL DISTRIBUTION AND MORPHOLOGY PROTEIN 10"/>
    <property type="match status" value="1"/>
</dbReference>
<dbReference type="Pfam" id="PF12519">
    <property type="entry name" value="MDM10"/>
    <property type="match status" value="2"/>
</dbReference>
<gene>
    <name evidence="1" type="primary">MDM10</name>
    <name type="ORF">MCYG_03963</name>
</gene>
<evidence type="ECO:0000255" key="1">
    <source>
        <dbReference type="HAMAP-Rule" id="MF_03102"/>
    </source>
</evidence>
<evidence type="ECO:0000305" key="2"/>
<organism>
    <name type="scientific">Arthroderma otae (strain ATCC MYA-4605 / CBS 113480)</name>
    <name type="common">Microsporum canis</name>
    <dbReference type="NCBI Taxonomy" id="554155"/>
    <lineage>
        <taxon>Eukaryota</taxon>
        <taxon>Fungi</taxon>
        <taxon>Dikarya</taxon>
        <taxon>Ascomycota</taxon>
        <taxon>Pezizomycotina</taxon>
        <taxon>Eurotiomycetes</taxon>
        <taxon>Eurotiomycetidae</taxon>
        <taxon>Onygenales</taxon>
        <taxon>Arthrodermataceae</taxon>
        <taxon>Microsporum</taxon>
    </lineage>
</organism>
<feature type="chain" id="PRO_0000384185" description="Mitochondrial distribution and morphology protein 10">
    <location>
        <begin position="1"/>
        <end position="489"/>
    </location>
</feature>
<name>MDM10_ARTOC</name>
<reference key="1">
    <citation type="journal article" date="2012" name="MBio">
        <title>Comparative genome analysis of Trichophyton rubrum and related dermatophytes reveals candidate genes involved in infection.</title>
        <authorList>
            <person name="Martinez D.A."/>
            <person name="Oliver B.G."/>
            <person name="Graeser Y."/>
            <person name="Goldberg J.M."/>
            <person name="Li W."/>
            <person name="Martinez-Rossi N.M."/>
            <person name="Monod M."/>
            <person name="Shelest E."/>
            <person name="Barton R.C."/>
            <person name="Birch E."/>
            <person name="Brakhage A.A."/>
            <person name="Chen Z."/>
            <person name="Gurr S.J."/>
            <person name="Heiman D."/>
            <person name="Heitman J."/>
            <person name="Kosti I."/>
            <person name="Rossi A."/>
            <person name="Saif S."/>
            <person name="Samalova M."/>
            <person name="Saunders C.W."/>
            <person name="Shea T."/>
            <person name="Summerbell R.C."/>
            <person name="Xu J."/>
            <person name="Young S."/>
            <person name="Zeng Q."/>
            <person name="Birren B.W."/>
            <person name="Cuomo C.A."/>
            <person name="White T.C."/>
        </authorList>
    </citation>
    <scope>NUCLEOTIDE SEQUENCE [LARGE SCALE GENOMIC DNA]</scope>
    <source>
        <strain>ATCC MYA-4605 / CBS 113480</strain>
    </source>
</reference>
<comment type="function">
    <text evidence="1">Component of the ERMES/MDM complex, which serves as a molecular tether to connect the endoplasmic reticulum and mitochondria. Components of this complex are involved in the control of mitochondrial shape and protein biogenesis and may function in phospholipid exchange. MDM10 is involved in the late assembly steps of the general translocase of the mitochondrial outer membrane (TOM complex). Functions in the TOM40-specific route of the assembly of outer membrane beta-barrel proteins, including the association of TOM40 with the receptor TOM22 and small TOM proteins. Can associate with the SAM(core) complex as well as the MDM12-MMM1 complex, both involved in late steps of the major beta-barrel assembly pathway, that is responsible for biogenesis of all outer membrane beta-barrel proteins. May act as a switch that shuttles between both complexes and channels precursor proteins into the TOM40-specific pathway. Plays a role in mitochondrial morphology and in the inheritance of mitochondria.</text>
</comment>
<comment type="subunit">
    <text evidence="1">Component of the ER-mitochondria encounter structure (ERMES) or MDM complex, composed of MMM1, MDM10, MDM12 and MDM34. Associates with the mitochondrial outer membrane sorting assembly machinery SAM(core) complex.</text>
</comment>
<comment type="subcellular location">
    <subcellularLocation>
        <location evidence="1">Mitochondrion outer membrane</location>
        <topology evidence="1">Multi-pass membrane protein</topology>
    </subcellularLocation>
    <text evidence="1">The ERMES/MDM complex localizes to a few discrete foci (around 10 per single cell), that represent mitochondria-endoplasmic reticulum junctions. These foci are often found next to mtDNA nucleoids.</text>
</comment>
<comment type="domain">
    <text>Lacks alpha-helical transmembrane segments, suggesting that it resides in the membrane via beta-sheet conformations similar to those predicted for other outer membrane proteins and porin.</text>
</comment>
<comment type="similarity">
    <text evidence="1">Belongs to the MDM10 family.</text>
</comment>
<comment type="sequence caution" evidence="2">
    <conflict type="erroneous initiation">
        <sequence resource="EMBL-CDS" id="EEQ31144"/>
    </conflict>
</comment>
<proteinExistence type="inferred from homology"/>
<protein>
    <recommendedName>
        <fullName evidence="1">Mitochondrial distribution and morphology protein 10</fullName>
    </recommendedName>
    <alternativeName>
        <fullName evidence="1">Mitochondrial inheritance component MDM10</fullName>
    </alternativeName>
</protein>
<keyword id="KW-0472">Membrane</keyword>
<keyword id="KW-0496">Mitochondrion</keyword>
<keyword id="KW-1000">Mitochondrion outer membrane</keyword>
<keyword id="KW-1185">Reference proteome</keyword>
<keyword id="KW-0812">Transmembrane</keyword>
<keyword id="KW-1134">Transmembrane beta strand</keyword>
<accession>C5FMP1</accession>
<sequence>MLDFMDYIQLAFSDASGWNRDNSYSTLTDTAKALLDFSTPERLRVHLSSLSTPQFATTYTLGTVGLIDGSVSYLFSTIPLDKTPSRSALISLRSLVPGYRQIYPPAVPLDLGLEWTLGSSGNTGAAEQALSNAYEDTGRSERKRKATLLHATLHLPPPTTLTALFLHRPSPTTKVSVALWSSQATNISKSASPQASILTQLFHDTGKYSTEFLFSTDNTLFGFRGLWNFGPDPRDSGGRNIATGNVKREKTSCPQSVALLSAGGEAYYSPTSSVIGLSTGVRFTTLPAAYDARSSSTSPPTLGGAGGSQIPSPISTFPYTLTLTLTPLTGSLSTTYSLLASPNLALSSRFGFNVYSWESEMVAGCELWRNRKKINLHNYNPDGSVDDLAWAKRKLGLLPPLESSDPASSSSSVSPTVSPVTSESVIKLRVDQSLRVRLLWEGRIKDLLVSAGVALGPTSAHTPSISCSGGSSSKGYSWTGVGVSVLYSS</sequence>